<name>PRL_BOVIN</name>
<proteinExistence type="evidence at protein level"/>
<reference key="1">
    <citation type="journal article" date="1982" name="J. Biol. Chem.">
        <title>Nucleotide sequence of bovine prolactin messenger RNA. Evidence for sequence polymorphism.</title>
        <authorList>
            <person name="Sasavage N.L."/>
            <person name="Nilson J.H."/>
            <person name="Horowitz S."/>
            <person name="Rottman F.M."/>
        </authorList>
    </citation>
    <scope>NUCLEOTIDE SEQUENCE [MRNA]</scope>
</reference>
<reference key="2">
    <citation type="journal article" date="2002" name="Yi Chuan Xue Bao">
        <title>Molecular cloning and analysis of bovine prolactin full-long genomic as well as cDNA sequences.</title>
        <authorList>
            <person name="Cao X."/>
            <person name="Wang Q."/>
            <person name="Yan J.B."/>
            <person name="Yang F.K."/>
            <person name="Huang S.Z."/>
            <person name="Zeng Y.T."/>
        </authorList>
    </citation>
    <scope>NUCLEOTIDE SEQUENCE [GENOMIC DNA]</scope>
    <source>
        <tissue>Blood</tissue>
    </source>
</reference>
<reference key="3">
    <citation type="submission" date="2007-06" db="EMBL/GenBank/DDBJ databases">
        <authorList>
            <consortium name="NIH - Mammalian Gene Collection (MGC) project"/>
        </authorList>
    </citation>
    <scope>NUCLEOTIDE SEQUENCE [LARGE SCALE MRNA]</scope>
    <source>
        <strain>Hereford</strain>
        <tissue>Fetal medulla</tissue>
    </source>
</reference>
<reference key="4">
    <citation type="journal article" date="1988" name="Mol. Biol. (Mosk.)">
        <title>Genetic engineering of peptide hormones. II. Possible polymorphism of preprolactin in cattle. Data of molecular cloning.</title>
        <authorList>
            <person name="Rubtsov P.M."/>
            <person name="Oganesyan R.G."/>
            <person name="Gorbulev V.G."/>
            <person name="Skryabin K.G."/>
            <person name="Baev A.A."/>
        </authorList>
    </citation>
    <scope>NUCLEOTIDE SEQUENCE [MRNA] OF 1-68 AND 96-229</scope>
</reference>
<reference key="5">
    <citation type="journal article" date="1984" name="DNA">
        <title>Characterization of the bovine prolactin gene.</title>
        <authorList>
            <person name="Camper S.A."/>
            <person name="Luck D.N."/>
            <person name="Yao Y."/>
            <person name="Woychik R.P."/>
            <person name="Goodwin R.G."/>
            <person name="Lyons R.H."/>
            <person name="Rottman F.M."/>
        </authorList>
    </citation>
    <scope>NUCLEOTIDE SEQUENCE [GENOMIC DNA] OF 1-38</scope>
</reference>
<reference key="6">
    <citation type="journal article" date="1981" name="DNA">
        <title>Cloning of bovine prolactin cDNA and evolutionary implications of its sequence.</title>
        <authorList>
            <person name="Miller W.L."/>
            <person name="Coit D."/>
            <person name="Baxter J.D."/>
            <person name="Martial J.A."/>
        </authorList>
    </citation>
    <scope>NUCLEOTIDE SEQUENCE [MRNA] OF 21-229</scope>
</reference>
<reference key="7">
    <citation type="journal article" date="1982" name="DNA">
        <title>Bovine prolactin: corrected cDNA sequence and genetic polymorphisms.</title>
        <authorList>
            <person name="Miller W.L."/>
            <person name="Coit D."/>
            <person name="Baxter J.D."/>
            <person name="Martial J.A."/>
        </authorList>
    </citation>
    <scope>SEQUENCE REVISION</scope>
</reference>
<reference key="8">
    <citation type="journal article" date="1974" name="FEBS Lett.">
        <title>The primary structure of bovine prolactin.</title>
        <authorList>
            <person name="Wallis M."/>
        </authorList>
    </citation>
    <scope>PRELIMINARY PROTEIN SEQUENCE OF 31-229</scope>
</reference>
<reference key="9">
    <citation type="journal article" date="1970" name="Acta Biochim. Biophys. Acad. Sci. Hung.">
        <title>An evidence for deamidation of prolactin monomer.</title>
        <authorList>
            <person name="Graf L."/>
            <person name="Cseh G."/>
            <person name="Nagy I."/>
            <person name="Kurcz M."/>
        </authorList>
    </citation>
    <scope>PROTEIN SEQUENCE OF 31-46</scope>
</reference>
<reference key="10">
    <citation type="journal article" date="1993" name="Biochem. J.">
        <title>Isolation and characterization of phosphorylated bovine prolactin.</title>
        <authorList>
            <person name="Kim B.G."/>
            <person name="Brooks C.L."/>
        </authorList>
    </citation>
    <scope>PROTEIN SEQUENCE OF 52-72 AND 120-133</scope>
    <scope>PHOSPHORYLATION AT SER-56; SER-64 AND SER-120</scope>
    <source>
        <tissue>Pituitary</tissue>
    </source>
</reference>
<feature type="signal peptide" evidence="3">
    <location>
        <begin position="1"/>
        <end position="30"/>
    </location>
</feature>
<feature type="chain" id="PRO_0000032911" description="Prolactin">
    <location>
        <begin position="31"/>
        <end position="229"/>
    </location>
</feature>
<feature type="modified residue" description="Phosphoserine" evidence="4">
    <location>
        <position position="56"/>
    </location>
</feature>
<feature type="modified residue" description="Phosphoserine" evidence="4">
    <location>
        <position position="64"/>
    </location>
</feature>
<feature type="modified residue" description="Phosphoserine" evidence="4">
    <location>
        <position position="120"/>
    </location>
</feature>
<feature type="disulfide bond" evidence="2">
    <location>
        <begin position="34"/>
        <end position="41"/>
    </location>
</feature>
<feature type="disulfide bond" evidence="2">
    <location>
        <begin position="88"/>
        <end position="204"/>
    </location>
</feature>
<feature type="disulfide bond" evidence="2">
    <location>
        <begin position="221"/>
        <end position="229"/>
    </location>
</feature>
<feature type="sequence conflict" description="In Ref. 8; AA sequence." evidence="5" ref="8">
    <original>D</original>
    <variation>N</variation>
    <location>
        <position position="61"/>
    </location>
</feature>
<dbReference type="EMBL" id="V00112">
    <property type="protein sequence ID" value="CAA23446.1"/>
    <property type="molecule type" value="mRNA"/>
</dbReference>
<dbReference type="EMBL" id="BC148124">
    <property type="protein sequence ID" value="AAI48125.1"/>
    <property type="molecule type" value="mRNA"/>
</dbReference>
<dbReference type="EMBL" id="AF426315">
    <property type="protein sequence ID" value="AAL28075.1"/>
    <property type="molecule type" value="Genomic_DNA"/>
</dbReference>
<dbReference type="EMBL" id="M36873">
    <property type="protein sequence ID" value="AAA30737.1"/>
    <property type="molecule type" value="mRNA"/>
</dbReference>
<dbReference type="EMBL" id="M36874">
    <property type="protein sequence ID" value="AAA30738.1"/>
    <property type="molecule type" value="mRNA"/>
</dbReference>
<dbReference type="EMBL" id="X14320">
    <property type="protein sequence ID" value="CAA32500.1"/>
    <property type="molecule type" value="mRNA"/>
</dbReference>
<dbReference type="EMBL" id="X14321">
    <property type="protein sequence ID" value="CAA32501.1"/>
    <property type="molecule type" value="mRNA"/>
</dbReference>
<dbReference type="EMBL" id="X01452">
    <property type="protein sequence ID" value="CAB57794.1"/>
    <property type="molecule type" value="Genomic_DNA"/>
</dbReference>
<dbReference type="EMBL" id="X01744">
    <property type="protein sequence ID" value="CAA25880.1"/>
    <property type="molecule type" value="Genomic_DNA"/>
</dbReference>
<dbReference type="PIR" id="A92378">
    <property type="entry name" value="LCBO"/>
</dbReference>
<dbReference type="RefSeq" id="NP_776378.2">
    <property type="nucleotide sequence ID" value="NM_173953.2"/>
</dbReference>
<dbReference type="PDB" id="3JC2">
    <property type="method" value="EM"/>
    <property type="resolution" value="3.60 A"/>
    <property type="chains" value="w=12-30"/>
</dbReference>
<dbReference type="PDBsum" id="3JC2"/>
<dbReference type="SMR" id="P01239"/>
<dbReference type="FunCoup" id="P01239">
    <property type="interactions" value="327"/>
</dbReference>
<dbReference type="STRING" id="9913.ENSBTAP00000020313"/>
<dbReference type="iPTMnet" id="P01239"/>
<dbReference type="PaxDb" id="9913-ENSBTAP00000020313"/>
<dbReference type="Ensembl" id="ENSBTAT00000107459.1">
    <property type="protein sequence ID" value="ENSBTAP00000100095.1"/>
    <property type="gene ID" value="ENSBTAG00000015274.5"/>
</dbReference>
<dbReference type="GeneID" id="280901"/>
<dbReference type="KEGG" id="bta:280901"/>
<dbReference type="CTD" id="5617"/>
<dbReference type="VEuPathDB" id="HostDB:ENSBTAG00000015274"/>
<dbReference type="eggNOG" id="ENOG502QYU3">
    <property type="taxonomic scope" value="Eukaryota"/>
</dbReference>
<dbReference type="GeneTree" id="ENSGT00950000182818"/>
<dbReference type="HOGENOM" id="CLU_088274_0_1_1"/>
<dbReference type="InParanoid" id="P01239"/>
<dbReference type="OMA" id="EVYSRWS"/>
<dbReference type="OrthoDB" id="9946219at2759"/>
<dbReference type="TreeFam" id="TF332592"/>
<dbReference type="Proteomes" id="UP000009136">
    <property type="component" value="Chromosome 23"/>
</dbReference>
<dbReference type="Bgee" id="ENSBTAG00000015274">
    <property type="expression patterns" value="Expressed in adenohypophysis and 60 other cell types or tissues"/>
</dbReference>
<dbReference type="GO" id="GO:0005829">
    <property type="term" value="C:cytosol"/>
    <property type="evidence" value="ECO:0000304"/>
    <property type="project" value="Reactome"/>
</dbReference>
<dbReference type="GO" id="GO:0005788">
    <property type="term" value="C:endoplasmic reticulum lumen"/>
    <property type="evidence" value="ECO:0000304"/>
    <property type="project" value="Reactome"/>
</dbReference>
<dbReference type="GO" id="GO:0005789">
    <property type="term" value="C:endoplasmic reticulum membrane"/>
    <property type="evidence" value="ECO:0000304"/>
    <property type="project" value="Reactome"/>
</dbReference>
<dbReference type="GO" id="GO:0005615">
    <property type="term" value="C:extracellular space"/>
    <property type="evidence" value="ECO:0000314"/>
    <property type="project" value="AgBase"/>
</dbReference>
<dbReference type="GO" id="GO:0005179">
    <property type="term" value="F:hormone activity"/>
    <property type="evidence" value="ECO:0000318"/>
    <property type="project" value="GO_Central"/>
</dbReference>
<dbReference type="GO" id="GO:0005148">
    <property type="term" value="F:prolactin receptor binding"/>
    <property type="evidence" value="ECO:0000250"/>
    <property type="project" value="AgBase"/>
</dbReference>
<dbReference type="GO" id="GO:0009058">
    <property type="term" value="P:biosynthetic process"/>
    <property type="evidence" value="ECO:0000314"/>
    <property type="project" value="AgBase"/>
</dbReference>
<dbReference type="GO" id="GO:0001825">
    <property type="term" value="P:blastocyst formation"/>
    <property type="evidence" value="ECO:0000314"/>
    <property type="project" value="AgBase"/>
</dbReference>
<dbReference type="GO" id="GO:0007166">
    <property type="term" value="P:cell surface receptor signaling pathway"/>
    <property type="evidence" value="ECO:0000315"/>
    <property type="project" value="AgBase"/>
</dbReference>
<dbReference type="GO" id="GO:0007565">
    <property type="term" value="P:female pregnancy"/>
    <property type="evidence" value="ECO:0000318"/>
    <property type="project" value="GO_Central"/>
</dbReference>
<dbReference type="GO" id="GO:0006954">
    <property type="term" value="P:inflammatory response"/>
    <property type="evidence" value="ECO:0000315"/>
    <property type="project" value="AgBase"/>
</dbReference>
<dbReference type="GO" id="GO:0007595">
    <property type="term" value="P:lactation"/>
    <property type="evidence" value="ECO:0007669"/>
    <property type="project" value="UniProtKB-KW"/>
</dbReference>
<dbReference type="GO" id="GO:0048571">
    <property type="term" value="P:long-day photoperiodism"/>
    <property type="evidence" value="ECO:0000314"/>
    <property type="project" value="AgBase"/>
</dbReference>
<dbReference type="GO" id="GO:0030879">
    <property type="term" value="P:mammary gland development"/>
    <property type="evidence" value="ECO:0000318"/>
    <property type="project" value="GO_Central"/>
</dbReference>
<dbReference type="GO" id="GO:0043066">
    <property type="term" value="P:negative regulation of apoptotic process"/>
    <property type="evidence" value="ECO:0000250"/>
    <property type="project" value="AgBase"/>
</dbReference>
<dbReference type="GO" id="GO:0010629">
    <property type="term" value="P:negative regulation of gene expression"/>
    <property type="evidence" value="ECO:0000315"/>
    <property type="project" value="AgBase"/>
</dbReference>
<dbReference type="GO" id="GO:0030072">
    <property type="term" value="P:peptide hormone secretion"/>
    <property type="evidence" value="ECO:0000250"/>
    <property type="project" value="AgBase"/>
</dbReference>
<dbReference type="GO" id="GO:0043123">
    <property type="term" value="P:positive regulation of canonical NF-kappaB signal transduction"/>
    <property type="evidence" value="ECO:0000315"/>
    <property type="project" value="AgBase"/>
</dbReference>
<dbReference type="GO" id="GO:0045807">
    <property type="term" value="P:positive regulation of endocytosis"/>
    <property type="evidence" value="ECO:0000315"/>
    <property type="project" value="AgBase"/>
</dbReference>
<dbReference type="GO" id="GO:0045723">
    <property type="term" value="P:positive regulation of fatty acid biosynthetic process"/>
    <property type="evidence" value="ECO:0000250"/>
    <property type="project" value="AgBase"/>
</dbReference>
<dbReference type="GO" id="GO:0010628">
    <property type="term" value="P:positive regulation of gene expression"/>
    <property type="evidence" value="ECO:0000315"/>
    <property type="project" value="AgBase"/>
</dbReference>
<dbReference type="GO" id="GO:1903489">
    <property type="term" value="P:positive regulation of lactation"/>
    <property type="evidence" value="ECO:0000315"/>
    <property type="project" value="AgBase"/>
</dbReference>
<dbReference type="GO" id="GO:0045429">
    <property type="term" value="P:positive regulation of nitric oxide biosynthetic process"/>
    <property type="evidence" value="ECO:0000315"/>
    <property type="project" value="AgBase"/>
</dbReference>
<dbReference type="GO" id="GO:1901224">
    <property type="term" value="P:positive regulation of non-canonical NF-kappaB signal transduction"/>
    <property type="evidence" value="ECO:0000315"/>
    <property type="project" value="AgBase"/>
</dbReference>
<dbReference type="GO" id="GO:0050766">
    <property type="term" value="P:positive regulation of phagocytosis"/>
    <property type="evidence" value="ECO:0000315"/>
    <property type="project" value="AgBase"/>
</dbReference>
<dbReference type="GO" id="GO:0046427">
    <property type="term" value="P:positive regulation of receptor signaling pathway via JAK-STAT"/>
    <property type="evidence" value="ECO:0000318"/>
    <property type="project" value="GO_Central"/>
</dbReference>
<dbReference type="GO" id="GO:1903538">
    <property type="term" value="P:regulation of meiotic cell cycle process involved in oocyte maturation"/>
    <property type="evidence" value="ECO:0000314"/>
    <property type="project" value="AgBase"/>
</dbReference>
<dbReference type="GO" id="GO:0043207">
    <property type="term" value="P:response to external biotic stimulus"/>
    <property type="evidence" value="ECO:0000314"/>
    <property type="project" value="AgBase"/>
</dbReference>
<dbReference type="GO" id="GO:0032094">
    <property type="term" value="P:response to food"/>
    <property type="evidence" value="ECO:0000314"/>
    <property type="project" value="AgBase"/>
</dbReference>
<dbReference type="GO" id="GO:1903576">
    <property type="term" value="P:response to L-arginine"/>
    <property type="evidence" value="ECO:0000314"/>
    <property type="project" value="AgBase"/>
</dbReference>
<dbReference type="GO" id="GO:0009612">
    <property type="term" value="P:response to mechanical stimulus"/>
    <property type="evidence" value="ECO:0000314"/>
    <property type="project" value="AgBase"/>
</dbReference>
<dbReference type="GO" id="GO:0031667">
    <property type="term" value="P:response to nutrient levels"/>
    <property type="evidence" value="ECO:0000318"/>
    <property type="project" value="GO_Central"/>
</dbReference>
<dbReference type="CDD" id="cd10288">
    <property type="entry name" value="prolactin_like"/>
    <property type="match status" value="1"/>
</dbReference>
<dbReference type="FunFam" id="1.20.1250.10:FF:000003">
    <property type="entry name" value="Prolactin"/>
    <property type="match status" value="1"/>
</dbReference>
<dbReference type="Gene3D" id="1.20.1250.10">
    <property type="match status" value="1"/>
</dbReference>
<dbReference type="InterPro" id="IPR009079">
    <property type="entry name" value="4_helix_cytokine-like_core"/>
</dbReference>
<dbReference type="InterPro" id="IPR001400">
    <property type="entry name" value="Somatotropin/Prolactin"/>
</dbReference>
<dbReference type="InterPro" id="IPR018116">
    <property type="entry name" value="Somatotropin_CS"/>
</dbReference>
<dbReference type="PANTHER" id="PTHR11417:SF5">
    <property type="entry name" value="PROLACTIN"/>
    <property type="match status" value="1"/>
</dbReference>
<dbReference type="PANTHER" id="PTHR11417">
    <property type="entry name" value="SOMATOTROPIN,PROLACTIN"/>
    <property type="match status" value="1"/>
</dbReference>
<dbReference type="Pfam" id="PF00103">
    <property type="entry name" value="Hormone_1"/>
    <property type="match status" value="1"/>
</dbReference>
<dbReference type="PRINTS" id="PR00836">
    <property type="entry name" value="SOMATOTROPIN"/>
</dbReference>
<dbReference type="SUPFAM" id="SSF47266">
    <property type="entry name" value="4-helical cytokines"/>
    <property type="match status" value="1"/>
</dbReference>
<dbReference type="PROSITE" id="PS00266">
    <property type="entry name" value="SOMATOTROPIN_1"/>
    <property type="match status" value="1"/>
</dbReference>
<dbReference type="PROSITE" id="PS00338">
    <property type="entry name" value="SOMATOTROPIN_2"/>
    <property type="match status" value="1"/>
</dbReference>
<organism>
    <name type="scientific">Bos taurus</name>
    <name type="common">Bovine</name>
    <dbReference type="NCBI Taxonomy" id="9913"/>
    <lineage>
        <taxon>Eukaryota</taxon>
        <taxon>Metazoa</taxon>
        <taxon>Chordata</taxon>
        <taxon>Craniata</taxon>
        <taxon>Vertebrata</taxon>
        <taxon>Euteleostomi</taxon>
        <taxon>Mammalia</taxon>
        <taxon>Eutheria</taxon>
        <taxon>Laurasiatheria</taxon>
        <taxon>Artiodactyla</taxon>
        <taxon>Ruminantia</taxon>
        <taxon>Pecora</taxon>
        <taxon>Bovidae</taxon>
        <taxon>Bovinae</taxon>
        <taxon>Bos</taxon>
    </lineage>
</organism>
<sequence>MDSKGSSQKGSRLLLLLVVSNLLLCQGVVSTPVCPNGPGNCQVSLRDLFDRAVMVSHYIHDLSSEMFNEFDKRYAQGKGFITMALNSCHTSSLPTPEDKEQAQQTHHEVLMSLILGLLRSWNDPLYHLVTEVRGMKGAPDAILSRAIEIEEENKRLLEGMEMIFGQVIPGAKETEPYPVWSGLPSLQTKDEDARYSAFYNLLHCLRRDSSKIDTYLKLLNCRIIYNNNC</sequence>
<protein>
    <recommendedName>
        <fullName>Prolactin</fullName>
        <shortName>PRL</shortName>
    </recommendedName>
</protein>
<evidence type="ECO:0000250" key="1">
    <source>
        <dbReference type="UniProtKB" id="P01236"/>
    </source>
</evidence>
<evidence type="ECO:0000269" key="2">
    <source>
    </source>
</evidence>
<evidence type="ECO:0000269" key="3">
    <source>
    </source>
</evidence>
<evidence type="ECO:0000269" key="4">
    <source>
    </source>
</evidence>
<evidence type="ECO:0000305" key="5"/>
<gene>
    <name type="primary">PRL</name>
</gene>
<keyword id="KW-0002">3D-structure</keyword>
<keyword id="KW-0903">Direct protein sequencing</keyword>
<keyword id="KW-1015">Disulfide bond</keyword>
<keyword id="KW-0372">Hormone</keyword>
<keyword id="KW-0421">Lactation</keyword>
<keyword id="KW-0597">Phosphoprotein</keyword>
<keyword id="KW-1185">Reference proteome</keyword>
<keyword id="KW-0964">Secreted</keyword>
<keyword id="KW-0732">Signal</keyword>
<comment type="function">
    <text>Prolactin acts primarily on the mammary gland by promoting lactation.</text>
</comment>
<comment type="subunit">
    <text evidence="1">Interacts with PRLR.</text>
</comment>
<comment type="subcellular location">
    <subcellularLocation>
        <location>Secreted</location>
    </subcellularLocation>
</comment>
<comment type="similarity">
    <text evidence="5">Belongs to the somatotropin/prolactin family.</text>
</comment>
<accession>P01239</accession>
<accession>A6QLX8</accession>
<accession>Q29417</accession>
<accession>Q95112</accession>